<accession>P65689</accession>
<accession>A0A1R3Y0L1</accession>
<accession>Q10520</accession>
<accession>X2BK87</accession>
<keyword id="KW-0049">Antioxidant</keyword>
<keyword id="KW-0560">Oxidoreductase</keyword>
<keyword id="KW-0575">Peroxidase</keyword>
<keyword id="KW-0676">Redox-active center</keyword>
<keyword id="KW-1185">Reference proteome</keyword>
<sequence>MLNVGATAPDFTLRDQNQQLVTLRGYRGAKNVLLVFFPLAFTGICQGELDQLRDHLPEFENDDSAALAISVGPPPTHKIWATQSGFTFPLLSDFWPHGAVSQAYGVFNEQAGIANRGTFVVDRSGIIRFAEMKQPGEVRDQRLWTDALAALTA</sequence>
<comment type="function">
    <text evidence="2">Thiol-specific peroxidase that catalyzes the reduction of hydrogen peroxide and organic hydroperoxides to water and alcohols, respectively. Plays a role in cell protection against oxidative stress by detoxifying peroxides. May represent an important antioxidant defense against cytotoxic peroxides, especially peroxynitrite, which can be formed by activated macrophages during infection.</text>
</comment>
<comment type="catalytic activity">
    <reaction evidence="2">
        <text>[mycoredoxin]-L-dithiol + a hydroperoxide = [mycoredoxin]-L-disulfide + an alcohol + H2O</text>
        <dbReference type="Rhea" id="RHEA:62640"/>
        <dbReference type="Rhea" id="RHEA-COMP:16137"/>
        <dbReference type="Rhea" id="RHEA-COMP:16138"/>
        <dbReference type="ChEBI" id="CHEBI:15377"/>
        <dbReference type="ChEBI" id="CHEBI:29950"/>
        <dbReference type="ChEBI" id="CHEBI:30879"/>
        <dbReference type="ChEBI" id="CHEBI:35924"/>
        <dbReference type="ChEBI" id="CHEBI:50058"/>
        <dbReference type="EC" id="1.11.1.29"/>
    </reaction>
</comment>
<comment type="subunit">
    <text evidence="2">Homodimer. Forms both dimers and octamers; a tightly-associated dimer and a ring-like octamer.</text>
</comment>
<comment type="miscellaneous">
    <text evidence="2">The active site is a conserved redox-active cysteine residue, the peroxidatic cysteine (C(P)), which makes the nucleophilic attack on the peroxide substrate. The peroxide oxidizes the C(P)-SH to cysteine sulfenic acid (C(P)-SOH), which then reacts with another cysteine residue, the resolving cysteine (C(R)), to form a disulfide bridge. The disulfide is subsequently reduced by an appropriate electron donor to complete the catalytic cycle. In this 1-Cys peroxiredoxin, no C(R) is present and C(P) instead forms a disulfide with a cysteine from another protein or with a small thiol molecule. C(P) can be reactivated through a mixed disulfide with the N-terminal cysteine of mycoredoxin-1 (Mrx1), resolved by its C-terminal cysteine, or by a mixed disulfide with mycothiol, resolved by a second molecule of mycothiol or by mycoredoxin-1.</text>
</comment>
<comment type="similarity">
    <text evidence="4">Belongs to the peroxiredoxin family. AhpE subfamily.</text>
</comment>
<dbReference type="EC" id="1.11.1.29" evidence="2"/>
<dbReference type="EMBL" id="LT708304">
    <property type="protein sequence ID" value="SIU00873.1"/>
    <property type="molecule type" value="Genomic_DNA"/>
</dbReference>
<dbReference type="RefSeq" id="NP_855911.1">
    <property type="nucleotide sequence ID" value="NC_002945.3"/>
</dbReference>
<dbReference type="RefSeq" id="WP_003411527.1">
    <property type="nucleotide sequence ID" value="NC_002945.4"/>
</dbReference>
<dbReference type="SMR" id="P65689"/>
<dbReference type="PeroxiBase" id="6017">
    <property type="entry name" value="MboAhpE"/>
</dbReference>
<dbReference type="GeneID" id="45426218"/>
<dbReference type="KEGG" id="mbo:BQ2027_MB2262C"/>
<dbReference type="PATRIC" id="fig|233413.5.peg.2483"/>
<dbReference type="Proteomes" id="UP000001419">
    <property type="component" value="Chromosome"/>
</dbReference>
<dbReference type="GO" id="GO:0004601">
    <property type="term" value="F:peroxidase activity"/>
    <property type="evidence" value="ECO:0007669"/>
    <property type="project" value="UniProtKB-KW"/>
</dbReference>
<dbReference type="CDD" id="cd03018">
    <property type="entry name" value="PRX_AhpE_like"/>
    <property type="match status" value="1"/>
</dbReference>
<dbReference type="FunFam" id="3.40.30.10:FF:000118">
    <property type="entry name" value="Peroxiredoxin AhpE"/>
    <property type="match status" value="1"/>
</dbReference>
<dbReference type="Gene3D" id="3.40.30.10">
    <property type="entry name" value="Glutaredoxin"/>
    <property type="match status" value="1"/>
</dbReference>
<dbReference type="InterPro" id="IPR000866">
    <property type="entry name" value="AhpC/TSA"/>
</dbReference>
<dbReference type="InterPro" id="IPR024706">
    <property type="entry name" value="Peroxiredoxin_AhpC-typ"/>
</dbReference>
<dbReference type="InterPro" id="IPR036249">
    <property type="entry name" value="Thioredoxin-like_sf"/>
</dbReference>
<dbReference type="InterPro" id="IPR013766">
    <property type="entry name" value="Thioredoxin_domain"/>
</dbReference>
<dbReference type="InterPro" id="IPR050455">
    <property type="entry name" value="Tpx_Peroxidase_subfamily"/>
</dbReference>
<dbReference type="PANTHER" id="PTHR43110">
    <property type="entry name" value="THIOL PEROXIDASE"/>
    <property type="match status" value="1"/>
</dbReference>
<dbReference type="PANTHER" id="PTHR43110:SF1">
    <property type="entry name" value="THIOL PEROXIDASE"/>
    <property type="match status" value="1"/>
</dbReference>
<dbReference type="Pfam" id="PF00578">
    <property type="entry name" value="AhpC-TSA"/>
    <property type="match status" value="1"/>
</dbReference>
<dbReference type="PIRSF" id="PIRSF000239">
    <property type="entry name" value="AHPC"/>
    <property type="match status" value="1"/>
</dbReference>
<dbReference type="SUPFAM" id="SSF52833">
    <property type="entry name" value="Thioredoxin-like"/>
    <property type="match status" value="1"/>
</dbReference>
<dbReference type="PROSITE" id="PS51352">
    <property type="entry name" value="THIOREDOXIN_2"/>
    <property type="match status" value="1"/>
</dbReference>
<protein>
    <recommendedName>
        <fullName>Alkyl hydroperoxide reductase E</fullName>
        <ecNumber evidence="2">1.11.1.29</ecNumber>
    </recommendedName>
    <alternativeName>
        <fullName evidence="4">Mycoredoxin-dependent peroxiredoxin</fullName>
    </alternativeName>
    <alternativeName>
        <fullName>Peroxiredoxin AhpE</fullName>
        <shortName>Prx</shortName>
    </alternativeName>
    <alternativeName>
        <fullName>Thioredoxin peroxidase</fullName>
        <shortName>TPx</shortName>
    </alternativeName>
</protein>
<feature type="chain" id="PRO_0000135149" description="Alkyl hydroperoxide reductase E">
    <location>
        <begin position="1"/>
        <end position="153"/>
    </location>
</feature>
<feature type="domain" description="Thioredoxin" evidence="3">
    <location>
        <begin position="2"/>
        <end position="153"/>
    </location>
</feature>
<feature type="active site" evidence="1">
    <location>
        <position position="45"/>
    </location>
</feature>
<evidence type="ECO:0000250" key="1"/>
<evidence type="ECO:0000250" key="2">
    <source>
        <dbReference type="UniProtKB" id="P9WIE3"/>
    </source>
</evidence>
<evidence type="ECO:0000255" key="3">
    <source>
        <dbReference type="PROSITE-ProRule" id="PRU00691"/>
    </source>
</evidence>
<evidence type="ECO:0000305" key="4"/>
<reference key="1">
    <citation type="journal article" date="2003" name="Proc. Natl. Acad. Sci. U.S.A.">
        <title>The complete genome sequence of Mycobacterium bovis.</title>
        <authorList>
            <person name="Garnier T."/>
            <person name="Eiglmeier K."/>
            <person name="Camus J.-C."/>
            <person name="Medina N."/>
            <person name="Mansoor H."/>
            <person name="Pryor M."/>
            <person name="Duthoy S."/>
            <person name="Grondin S."/>
            <person name="Lacroix C."/>
            <person name="Monsempe C."/>
            <person name="Simon S."/>
            <person name="Harris B."/>
            <person name="Atkin R."/>
            <person name="Doggett J."/>
            <person name="Mayes R."/>
            <person name="Keating L."/>
            <person name="Wheeler P.R."/>
            <person name="Parkhill J."/>
            <person name="Barrell B.G."/>
            <person name="Cole S.T."/>
            <person name="Gordon S.V."/>
            <person name="Hewinson R.G."/>
        </authorList>
    </citation>
    <scope>NUCLEOTIDE SEQUENCE [LARGE SCALE GENOMIC DNA]</scope>
    <source>
        <strain>ATCC BAA-935 / AF2122/97</strain>
    </source>
</reference>
<reference key="2">
    <citation type="journal article" date="2017" name="Genome Announc.">
        <title>Updated reference genome sequence and annotation of Mycobacterium bovis AF2122/97.</title>
        <authorList>
            <person name="Malone K.M."/>
            <person name="Farrell D."/>
            <person name="Stuber T.P."/>
            <person name="Schubert O.T."/>
            <person name="Aebersold R."/>
            <person name="Robbe-Austerman S."/>
            <person name="Gordon S.V."/>
        </authorList>
    </citation>
    <scope>NUCLEOTIDE SEQUENCE [LARGE SCALE GENOMIC DNA]</scope>
    <scope>GENOME REANNOTATION</scope>
    <source>
        <strain>ATCC BAA-935 / AF2122/97</strain>
    </source>
</reference>
<name>AHPE_MYCBO</name>
<gene>
    <name type="primary">ahpE</name>
    <name type="ordered locus">BQ2027_MB2262C</name>
</gene>
<organism>
    <name type="scientific">Mycobacterium bovis (strain ATCC BAA-935 / AF2122/97)</name>
    <dbReference type="NCBI Taxonomy" id="233413"/>
    <lineage>
        <taxon>Bacteria</taxon>
        <taxon>Bacillati</taxon>
        <taxon>Actinomycetota</taxon>
        <taxon>Actinomycetes</taxon>
        <taxon>Mycobacteriales</taxon>
        <taxon>Mycobacteriaceae</taxon>
        <taxon>Mycobacterium</taxon>
        <taxon>Mycobacterium tuberculosis complex</taxon>
    </lineage>
</organism>
<proteinExistence type="inferred from homology"/>